<comment type="subcellular location">
    <subcellularLocation>
        <location evidence="2">Cell membrane</location>
        <topology evidence="1">Multi-pass membrane protein</topology>
    </subcellularLocation>
</comment>
<comment type="similarity">
    <text evidence="2">Belongs to the resistance-nodulation-cell division (RND) (TC 2.A.6) family. MmpL subfamily.</text>
</comment>
<name>MMPL4_MYCLE</name>
<sequence length="959" mass="105249">MTVKCANDLDTHTKPPFVARMIHRFAVPIILVWLAIAVTVSVFIPSLEDVGQERSVSLSPKDAPSYIAMQKMGQVFNEGNSDSVIMIVLEGDKPLGDDAHRFYDGLIRKLRADKHVQSVQDFWGDPLTAPGAQSNDGKAAYVQLSLAGNQGELLAQESIDAVRKIVVQTPAPPGITAWVTGASALIADMHHSGDKSMIRITATSVIVILVTLLLVYRSFITVILLLFTVGIESAVARGVVALLGHTGLIGLSTFAVNLLTSLAIAAGTDYGIFITGRYQEARQANENKEAAFYTMYRGTFHVILGSGLTISGATFCLSFARMPYFQTLGVPCAVGMLIAVAVALTLGPAVLTVGSRFGLFEPKRLIKVRGWRRIGTVVVRWPLPILITTCAIAMVGLLALPGYRTNYKDRAYLPASIPANQGFAAADRHFPQARMKPEILMIESDHDMRNPADFLILDKLARGIFRVPGISRVQAITRPDGTAMDHTSIPFQISMQNAGQVQTMKYQKDRMNDLLRQAENMAETIASMRRMHQLMALLTENTHHILNDTVEMQKTTSKLRDEIANFDDFWRPIRSYFYWERHCFNIPICWSFRSIFDALDGVDQIDERLNSIVGDIKNMDLLMPQMLEQFPPMIESMESMRTIMLTMHSTMSGIFDQMNELSDNANTMGKAFDTAKNDDSFYLPPEVFKNTDFKRAMKSFLSSDGHAARFIILHRGDPASVAGIASINAIRTAAEEALKGTPLEDTKIYLAGTAAVFKDIDEGANWDLVIAGISSLCLIFIIMLIITRAFVAAAVIVGTVALSLGASFGLSVLLWQHILGIELHYLVLAMSVIVLLAVGSDYNLLLVSRFKQEIQAGLKTGIIRSMGGTGKVVTNAGLVFAFTMASMVVSDLRVIGQVGTTIGLGLLFDTLIVRSFMMPSIAALLGRWFWWPQQGRTRPLLTVAAPVGLPPDRSLVYSD</sequence>
<feature type="chain" id="PRO_0000103567" description="Probable transport protein MmpL4">
    <location>
        <begin position="1"/>
        <end position="959"/>
    </location>
</feature>
<feature type="transmembrane region" description="Helical" evidence="1">
    <location>
        <begin position="25"/>
        <end position="45"/>
    </location>
</feature>
<feature type="transmembrane region" description="Helical" evidence="1">
    <location>
        <begin position="205"/>
        <end position="225"/>
    </location>
</feature>
<feature type="transmembrane region" description="Helical" evidence="1">
    <location>
        <begin position="239"/>
        <end position="259"/>
    </location>
</feature>
<feature type="transmembrane region" description="Helical" evidence="1">
    <location>
        <begin position="300"/>
        <end position="320"/>
    </location>
</feature>
<feature type="transmembrane region" description="Helical" evidence="1">
    <location>
        <begin position="333"/>
        <end position="353"/>
    </location>
</feature>
<feature type="transmembrane region" description="Helical" evidence="1">
    <location>
        <begin position="381"/>
        <end position="401"/>
    </location>
</feature>
<feature type="transmembrane region" description="Helical" evidence="1">
    <location>
        <begin position="766"/>
        <end position="786"/>
    </location>
</feature>
<feature type="transmembrane region" description="Helical" evidence="1">
    <location>
        <begin position="790"/>
        <end position="810"/>
    </location>
</feature>
<feature type="transmembrane region" description="Helical" evidence="1">
    <location>
        <begin position="818"/>
        <end position="838"/>
    </location>
</feature>
<feature type="transmembrane region" description="Helical" evidence="1">
    <location>
        <begin position="872"/>
        <end position="892"/>
    </location>
</feature>
<feature type="transmembrane region" description="Helical" evidence="1">
    <location>
        <begin position="902"/>
        <end position="922"/>
    </location>
</feature>
<accession>P54881</accession>
<reference key="1">
    <citation type="submission" date="1995-04" db="EMBL/GenBank/DDBJ databases">
        <authorList>
            <person name="Smith D.R."/>
            <person name="Robison K."/>
        </authorList>
    </citation>
    <scope>NUCLEOTIDE SEQUENCE [GENOMIC DNA]</scope>
</reference>
<reference key="2">
    <citation type="journal article" date="2001" name="Nature">
        <title>Massive gene decay in the leprosy bacillus.</title>
        <authorList>
            <person name="Cole S.T."/>
            <person name="Eiglmeier K."/>
            <person name="Parkhill J."/>
            <person name="James K.D."/>
            <person name="Thomson N.R."/>
            <person name="Wheeler P.R."/>
            <person name="Honore N."/>
            <person name="Garnier T."/>
            <person name="Churcher C.M."/>
            <person name="Harris D.E."/>
            <person name="Mungall K.L."/>
            <person name="Basham D."/>
            <person name="Brown D."/>
            <person name="Chillingworth T."/>
            <person name="Connor R."/>
            <person name="Davies R.M."/>
            <person name="Devlin K."/>
            <person name="Duthoy S."/>
            <person name="Feltwell T."/>
            <person name="Fraser A."/>
            <person name="Hamlin N."/>
            <person name="Holroyd S."/>
            <person name="Hornsby T."/>
            <person name="Jagels K."/>
            <person name="Lacroix C."/>
            <person name="Maclean J."/>
            <person name="Moule S."/>
            <person name="Murphy L.D."/>
            <person name="Oliver K."/>
            <person name="Quail M.A."/>
            <person name="Rajandream M.A."/>
            <person name="Rutherford K.M."/>
            <person name="Rutter S."/>
            <person name="Seeger K."/>
            <person name="Simon S."/>
            <person name="Simmonds M."/>
            <person name="Skelton J."/>
            <person name="Squares R."/>
            <person name="Squares S."/>
            <person name="Stevens K."/>
            <person name="Taylor K."/>
            <person name="Whitehead S."/>
            <person name="Woodward J.R."/>
            <person name="Barrell B.G."/>
        </authorList>
    </citation>
    <scope>NUCLEOTIDE SEQUENCE [LARGE SCALE GENOMIC DNA]</scope>
    <source>
        <strain>TN</strain>
    </source>
</reference>
<dbReference type="EMBL" id="U15183">
    <property type="protein sequence ID" value="AAA63006.1"/>
    <property type="molecule type" value="Genomic_DNA"/>
</dbReference>
<dbReference type="EMBL" id="AL583925">
    <property type="protein sequence ID" value="CAC31894.1"/>
    <property type="molecule type" value="Genomic_DNA"/>
</dbReference>
<dbReference type="PIR" id="F87206">
    <property type="entry name" value="F87206"/>
</dbReference>
<dbReference type="RefSeq" id="NP_302541.1">
    <property type="nucleotide sequence ID" value="NC_002677.1"/>
</dbReference>
<dbReference type="RefSeq" id="WP_010908861.1">
    <property type="nucleotide sequence ID" value="NC_002677.1"/>
</dbReference>
<dbReference type="SMR" id="P54881"/>
<dbReference type="STRING" id="272631.gene:17576240"/>
<dbReference type="KEGG" id="mle:ML2378"/>
<dbReference type="PATRIC" id="fig|272631.5.peg.4575"/>
<dbReference type="Leproma" id="ML2378"/>
<dbReference type="eggNOG" id="COG1033">
    <property type="taxonomic scope" value="Bacteria"/>
</dbReference>
<dbReference type="eggNOG" id="COG2409">
    <property type="taxonomic scope" value="Bacteria"/>
</dbReference>
<dbReference type="HOGENOM" id="CLU_005108_3_2_11"/>
<dbReference type="OrthoDB" id="4758927at2"/>
<dbReference type="Proteomes" id="UP000000806">
    <property type="component" value="Chromosome"/>
</dbReference>
<dbReference type="GO" id="GO:0005886">
    <property type="term" value="C:plasma membrane"/>
    <property type="evidence" value="ECO:0007669"/>
    <property type="project" value="UniProtKB-SubCell"/>
</dbReference>
<dbReference type="FunFam" id="1.20.1640.10:FF:000018">
    <property type="entry name" value="Transmembrane transport protein MmpL10"/>
    <property type="match status" value="1"/>
</dbReference>
<dbReference type="FunFam" id="1.20.1640.10:FF:000020">
    <property type="entry name" value="Transmembrane transport protein MmpL10"/>
    <property type="match status" value="1"/>
</dbReference>
<dbReference type="Gene3D" id="1.20.1640.10">
    <property type="entry name" value="Multidrug efflux transporter AcrB transmembrane domain"/>
    <property type="match status" value="2"/>
</dbReference>
<dbReference type="InterPro" id="IPR004869">
    <property type="entry name" value="MMPL_dom"/>
</dbReference>
<dbReference type="InterPro" id="IPR004707">
    <property type="entry name" value="MmpL_fam"/>
</dbReference>
<dbReference type="InterPro" id="IPR050545">
    <property type="entry name" value="Mycobact_MmpL"/>
</dbReference>
<dbReference type="NCBIfam" id="TIGR00833">
    <property type="entry name" value="actII"/>
    <property type="match status" value="1"/>
</dbReference>
<dbReference type="PANTHER" id="PTHR33406">
    <property type="entry name" value="MEMBRANE PROTEIN MJ1562-RELATED"/>
    <property type="match status" value="1"/>
</dbReference>
<dbReference type="PANTHER" id="PTHR33406:SF6">
    <property type="entry name" value="MEMBRANE PROTEIN YDGH-RELATED"/>
    <property type="match status" value="1"/>
</dbReference>
<dbReference type="Pfam" id="PF03176">
    <property type="entry name" value="MMPL"/>
    <property type="match status" value="2"/>
</dbReference>
<dbReference type="SUPFAM" id="SSF82866">
    <property type="entry name" value="Multidrug efflux transporter AcrB transmembrane domain"/>
    <property type="match status" value="2"/>
</dbReference>
<keyword id="KW-1003">Cell membrane</keyword>
<keyword id="KW-0472">Membrane</keyword>
<keyword id="KW-1185">Reference proteome</keyword>
<keyword id="KW-0812">Transmembrane</keyword>
<keyword id="KW-1133">Transmembrane helix</keyword>
<keyword id="KW-0813">Transport</keyword>
<proteinExistence type="inferred from homology"/>
<protein>
    <recommendedName>
        <fullName evidence="2">Probable transport protein MmpL4</fullName>
    </recommendedName>
</protein>
<gene>
    <name type="primary">mmpL4</name>
    <name type="ordered locus">ML2378</name>
    <name type="ORF">u1740v</name>
</gene>
<organism>
    <name type="scientific">Mycobacterium leprae (strain TN)</name>
    <dbReference type="NCBI Taxonomy" id="272631"/>
    <lineage>
        <taxon>Bacteria</taxon>
        <taxon>Bacillati</taxon>
        <taxon>Actinomycetota</taxon>
        <taxon>Actinomycetes</taxon>
        <taxon>Mycobacteriales</taxon>
        <taxon>Mycobacteriaceae</taxon>
        <taxon>Mycobacterium</taxon>
    </lineage>
</organism>
<evidence type="ECO:0000255" key="1"/>
<evidence type="ECO:0000305" key="2"/>